<sequence length="1180" mass="134539">MNPYQNKNEYETLNASQKKLNISNNYTRYPIENSPKQLLQSTNYKDWLNMCQQNQQYGGDFETFIDSGELSAYTIVVGTVLTGFGFTTPLGLALIGFGTLIPVLFPAQDQSNTWSDFITQTKNIIKKEIASTYISNANKILNRSFNVISTYHNHLKTWENNPNPQNTQDVRTQIQLVHYHFQNVIPELVNSCPPNPSDCDYYNILVLSSYAQAANLHLTVLNQAVKFEAYLKNNRQFDYLEPLPTAIDYYPVLTKAIEDYTNYCVTTYKKGLNLIKTTPDSNLDGNINWNTYNTYRTKMTTAVLDLVALFPNYDVGKYPIGVQSELTREIYQVLNFEESPYKYYDFQYQEDSLTRRPHLFTWLDSLNFYEKAQTTPNNFFTSHYNMFHYTLDNISQKSSVFGNHNVTDKLKSLGLATNIYIFLLNVISLDNKYLNDYNNISKMDFFITNGTRLLEKELTAGSGQITYDVNKNIFGLPILKRRENQGNPTLFPTYDNYSHILSFIKSLSIPATYKTQVYTFAWTHSSVDPKNTIYTHLTTQIPAVKANSLGTASKVVQGPGHTGGDLIDFKDHFKITCQHSNFQQSYFIRIRYASNGSANTRAVINLSIPGVAELGMALNPTFSGTDYTNLKYKDFQYLEFSNEVKFAPNQNISLVFNRSDVYTNTTVLIDKIEFLPITRSIREDREKQKLETVQQIINTFYANPIKNTLQSELTDYDIDQAANLVECISEELYPKEKMLLLDEVKNAKQLSQSRNVLQNGDFESATLGWTTSDNITIQEDDPIFKGHYLHMSGARDIDGTIFPTYIFQKIDESKLKPYTRYLVRGFVGSSKDVELVVSRYGEEIDAIMNVPADLNYLYPSTFDCEGSNRCETSAVPANIGNTSDMLYSCQYDTGKKHVVCQDSHQFSFTIDTGALDTNENIGVWVMFKISSPDGYASLDNLEVIEEGPIDGEALSRVKHMEKKWNDQMEAKRSETQQAYDVAKQAIDALFTNVQDEALQFDTTLAQIQYAEYLVQSIPYVYNDWLSDVPGMNYDIYVELDARVAQARYLYDTRNIIKNGDFTQGVMGWHVTGNADVQQIDGVSVLVLSNWSAGVSQNVHLQHNHGYVLRVIAKKEGPGNGYVTLMDCEENQEKLTFTSCEEGYITKTVDVFPDTDRVRIEIGETEGSFYIESIELICMNE</sequence>
<accession>P16480</accession>
<feature type="chain" id="PRO_0000174063" description="Pesticidal crystal protein Cry4Aa">
    <location>
        <begin position="1"/>
        <end position="1180"/>
    </location>
</feature>
<feature type="sequence conflict" description="In Ref. 2; CAA68485." evidence="2" ref="2">
    <original>L</original>
    <variation>V</variation>
    <location>
        <position position="306"/>
    </location>
</feature>
<feature type="sequence conflict" description="In Ref. 2; CAA68485." evidence="2" ref="2">
    <original>T</original>
    <variation>I</variation>
    <location>
        <position position="1052"/>
    </location>
</feature>
<feature type="sequence conflict" description="In Ref. 2; CAA68485." evidence="2" ref="2">
    <original>R</original>
    <variation>G</variation>
    <location>
        <position position="1109"/>
    </location>
</feature>
<feature type="sequence conflict" description="In Ref. 2; CAA68485." evidence="2" ref="2">
    <original>C</original>
    <variation>W</variation>
    <location>
        <position position="1127"/>
    </location>
</feature>
<feature type="helix" evidence="3">
    <location>
        <begin position="72"/>
        <end position="83"/>
    </location>
</feature>
<feature type="turn" evidence="3">
    <location>
        <begin position="89"/>
        <end position="95"/>
    </location>
</feature>
<feature type="helix" evidence="3">
    <location>
        <begin position="96"/>
        <end position="104"/>
    </location>
</feature>
<feature type="helix" evidence="3">
    <location>
        <begin position="108"/>
        <end position="110"/>
    </location>
</feature>
<feature type="helix" evidence="3">
    <location>
        <begin position="113"/>
        <end position="125"/>
    </location>
</feature>
<feature type="helix" evidence="3">
    <location>
        <begin position="131"/>
        <end position="141"/>
    </location>
</feature>
<feature type="helix" evidence="3">
    <location>
        <begin position="144"/>
        <end position="156"/>
    </location>
</feature>
<feature type="turn" evidence="3">
    <location>
        <begin position="157"/>
        <end position="160"/>
    </location>
</feature>
<feature type="turn" evidence="3">
    <location>
        <begin position="167"/>
        <end position="169"/>
    </location>
</feature>
<feature type="helix" evidence="3">
    <location>
        <begin position="170"/>
        <end position="190"/>
    </location>
</feature>
<feature type="helix" evidence="3">
    <location>
        <begin position="196"/>
        <end position="204"/>
    </location>
</feature>
<feature type="helix" evidence="3">
    <location>
        <begin position="207"/>
        <end position="231"/>
    </location>
</feature>
<feature type="helix" evidence="3">
    <location>
        <begin position="250"/>
        <end position="275"/>
    </location>
</feature>
<feature type="helix" evidence="3">
    <location>
        <begin position="281"/>
        <end position="283"/>
    </location>
</feature>
<feature type="helix" evidence="3">
    <location>
        <begin position="289"/>
        <end position="302"/>
    </location>
</feature>
<feature type="helix" evidence="3">
    <location>
        <begin position="304"/>
        <end position="307"/>
    </location>
</feature>
<feature type="helix" evidence="3">
    <location>
        <begin position="310"/>
        <end position="313"/>
    </location>
</feature>
<feature type="turn" evidence="3">
    <location>
        <begin position="315"/>
        <end position="317"/>
    </location>
</feature>
<feature type="strand" evidence="3">
    <location>
        <begin position="329"/>
        <end position="336"/>
    </location>
</feature>
<feature type="helix" evidence="3">
    <location>
        <begin position="340"/>
        <end position="343"/>
    </location>
</feature>
<feature type="helix" evidence="3">
    <location>
        <begin position="346"/>
        <end position="353"/>
    </location>
</feature>
<feature type="strand" evidence="3">
    <location>
        <begin position="361"/>
        <end position="370"/>
    </location>
</feature>
<feature type="strand" evidence="3">
    <location>
        <begin position="380"/>
        <end position="389"/>
    </location>
</feature>
<feature type="strand" evidence="3">
    <location>
        <begin position="409"/>
        <end position="414"/>
    </location>
</feature>
<feature type="strand" evidence="3">
    <location>
        <begin position="420"/>
        <end position="429"/>
    </location>
</feature>
<feature type="strand" evidence="3">
    <location>
        <begin position="434"/>
        <end position="436"/>
    </location>
</feature>
<feature type="strand" evidence="3">
    <location>
        <begin position="440"/>
        <end position="448"/>
    </location>
</feature>
<feature type="strand" evidence="3">
    <location>
        <begin position="450"/>
        <end position="463"/>
    </location>
</feature>
<feature type="strand" evidence="3">
    <location>
        <begin position="469"/>
        <end position="474"/>
    </location>
</feature>
<feature type="strand" evidence="3">
    <location>
        <begin position="498"/>
        <end position="507"/>
    </location>
</feature>
<feature type="turn" evidence="3">
    <location>
        <begin position="510"/>
        <end position="512"/>
    </location>
</feature>
<feature type="strand" evidence="3">
    <location>
        <begin position="517"/>
        <end position="524"/>
    </location>
</feature>
<feature type="strand" evidence="3">
    <location>
        <begin position="535"/>
        <end position="542"/>
    </location>
</feature>
<feature type="helix" evidence="3">
    <location>
        <begin position="543"/>
        <end position="545"/>
    </location>
</feature>
<feature type="strand" evidence="3">
    <location>
        <begin position="547"/>
        <end position="549"/>
    </location>
</feature>
<feature type="strand" evidence="3">
    <location>
        <begin position="554"/>
        <end position="556"/>
    </location>
</feature>
<feature type="strand" evidence="3">
    <location>
        <begin position="560"/>
        <end position="564"/>
    </location>
</feature>
<feature type="strand" evidence="3">
    <location>
        <begin position="566"/>
        <end position="568"/>
    </location>
</feature>
<feature type="strand" evidence="3">
    <location>
        <begin position="570"/>
        <end position="579"/>
    </location>
</feature>
<feature type="strand" evidence="3">
    <location>
        <begin position="584"/>
        <end position="594"/>
    </location>
</feature>
<feature type="strand" evidence="3">
    <location>
        <begin position="603"/>
        <end position="608"/>
    </location>
</feature>
<feature type="turn" evidence="3">
    <location>
        <begin position="609"/>
        <end position="611"/>
    </location>
</feature>
<feature type="strand" evidence="3">
    <location>
        <begin position="612"/>
        <end position="617"/>
    </location>
</feature>
<feature type="helix" evidence="3">
    <location>
        <begin position="632"/>
        <end position="634"/>
    </location>
</feature>
<feature type="strand" evidence="3">
    <location>
        <begin position="636"/>
        <end position="639"/>
    </location>
</feature>
<feature type="strand" evidence="3">
    <location>
        <begin position="644"/>
        <end position="646"/>
    </location>
</feature>
<feature type="strand" evidence="3">
    <location>
        <begin position="651"/>
        <end position="658"/>
    </location>
</feature>
<feature type="strand" evidence="3">
    <location>
        <begin position="667"/>
        <end position="676"/>
    </location>
</feature>
<geneLocation type="plasmid">
    <name>72 Kb</name>
</geneLocation>
<proteinExistence type="evidence at protein level"/>
<gene>
    <name type="primary">cry4Aa</name>
    <name type="synonym">cryIVA(a)</name>
    <name evidence="1" type="synonym">isrH4</name>
</gene>
<dbReference type="EMBL" id="D00248">
    <property type="protein sequence ID" value="BAA00179.1"/>
    <property type="molecule type" value="Genomic_DNA"/>
</dbReference>
<dbReference type="EMBL" id="Y00423">
    <property type="protein sequence ID" value="CAA68485.1"/>
    <property type="molecule type" value="Genomic_DNA"/>
</dbReference>
<dbReference type="PIR" id="A26858">
    <property type="entry name" value="A26858"/>
</dbReference>
<dbReference type="PIR" id="I39870">
    <property type="entry name" value="I39870"/>
</dbReference>
<dbReference type="RefSeq" id="WP_012211114.1">
    <property type="nucleotide sequence ID" value="NZ_LC128536.1"/>
</dbReference>
<dbReference type="PDB" id="2C9K">
    <property type="method" value="X-ray"/>
    <property type="resolution" value="2.80 A"/>
    <property type="chains" value="A=68-679"/>
</dbReference>
<dbReference type="PDBsum" id="2C9K"/>
<dbReference type="SMR" id="P16480"/>
<dbReference type="EvolutionaryTrace" id="P16480"/>
<dbReference type="GO" id="GO:0005102">
    <property type="term" value="F:signaling receptor binding"/>
    <property type="evidence" value="ECO:0007669"/>
    <property type="project" value="InterPro"/>
</dbReference>
<dbReference type="GO" id="GO:0090729">
    <property type="term" value="F:toxin activity"/>
    <property type="evidence" value="ECO:0007669"/>
    <property type="project" value="UniProtKB-KW"/>
</dbReference>
<dbReference type="GO" id="GO:0030435">
    <property type="term" value="P:sporulation resulting in formation of a cellular spore"/>
    <property type="evidence" value="ECO:0007669"/>
    <property type="project" value="UniProtKB-KW"/>
</dbReference>
<dbReference type="GO" id="GO:0001907">
    <property type="term" value="P:symbiont-mediated killing of host cell"/>
    <property type="evidence" value="ECO:0007669"/>
    <property type="project" value="InterPro"/>
</dbReference>
<dbReference type="CDD" id="cd04085">
    <property type="entry name" value="delta_endotoxin_C"/>
    <property type="match status" value="1"/>
</dbReference>
<dbReference type="Gene3D" id="2.60.120.260">
    <property type="entry name" value="Galactose-binding domain-like"/>
    <property type="match status" value="2"/>
</dbReference>
<dbReference type="Gene3D" id="2.100.10.10">
    <property type="entry name" value="Pesticidal crystal protein, central domain"/>
    <property type="match status" value="1"/>
</dbReference>
<dbReference type="Gene3D" id="1.20.190.10">
    <property type="entry name" value="Pesticidal crystal protein, N-terminal domain"/>
    <property type="match status" value="1"/>
</dbReference>
<dbReference type="InterPro" id="IPR048645">
    <property type="entry name" value="Cry1Ac-like_dom-VII"/>
</dbReference>
<dbReference type="InterPro" id="IPR041587">
    <property type="entry name" value="Cry_V"/>
</dbReference>
<dbReference type="InterPro" id="IPR008979">
    <property type="entry name" value="Galactose-bd-like_sf"/>
</dbReference>
<dbReference type="InterPro" id="IPR038979">
    <property type="entry name" value="Pest_crys"/>
</dbReference>
<dbReference type="InterPro" id="IPR005638">
    <property type="entry name" value="Pest_crys_dom-III"/>
</dbReference>
<dbReference type="InterPro" id="IPR005639">
    <property type="entry name" value="Pest_crys_dom_I"/>
</dbReference>
<dbReference type="InterPro" id="IPR036716">
    <property type="entry name" value="Pest_crys_N_sf"/>
</dbReference>
<dbReference type="InterPro" id="IPR036399">
    <property type="entry name" value="Pest_cryst_cen_dom_sf"/>
</dbReference>
<dbReference type="InterPro" id="IPR001178">
    <property type="entry name" value="Pest_cryst_dom_II"/>
</dbReference>
<dbReference type="PANTHER" id="PTHR37003">
    <property type="entry name" value="ENDOTOXIN_N DOMAIN-CONTAINING PROTEIN-RELATED"/>
    <property type="match status" value="1"/>
</dbReference>
<dbReference type="PANTHER" id="PTHR37003:SF2">
    <property type="entry name" value="PESTICIDAL CRYSTAL PROTEIN N-TERMINAL DOMAIN-CONTAINING PROTEIN"/>
    <property type="match status" value="1"/>
</dbReference>
<dbReference type="Pfam" id="PF17997">
    <property type="entry name" value="Cry1Ac_D5"/>
    <property type="match status" value="1"/>
</dbReference>
<dbReference type="Pfam" id="PF21463">
    <property type="entry name" value="Cry1Ac_dom-VII"/>
    <property type="match status" value="1"/>
</dbReference>
<dbReference type="Pfam" id="PF03944">
    <property type="entry name" value="Endotoxin_C"/>
    <property type="match status" value="1"/>
</dbReference>
<dbReference type="Pfam" id="PF00555">
    <property type="entry name" value="Endotoxin_M"/>
    <property type="match status" value="1"/>
</dbReference>
<dbReference type="Pfam" id="PF03945">
    <property type="entry name" value="Endotoxin_N"/>
    <property type="match status" value="1"/>
</dbReference>
<dbReference type="SUPFAM" id="SSF51096">
    <property type="entry name" value="delta-Endotoxin (insectocide), middle domain"/>
    <property type="match status" value="1"/>
</dbReference>
<dbReference type="SUPFAM" id="SSF56849">
    <property type="entry name" value="delta-Endotoxin (insectocide), N-terminal domain"/>
    <property type="match status" value="1"/>
</dbReference>
<dbReference type="SUPFAM" id="SSF49785">
    <property type="entry name" value="Galactose-binding domain-like"/>
    <property type="match status" value="2"/>
</dbReference>
<protein>
    <recommendedName>
        <fullName>Pesticidal crystal protein Cry4Aa</fullName>
    </recommendedName>
    <alternativeName>
        <fullName>135 kDa crystal protein</fullName>
    </alternativeName>
    <alternativeName>
        <fullName>Crystaline entomocidal protoxin</fullName>
    </alternativeName>
    <alternativeName>
        <fullName>Insecticidal delta-endotoxin CryIVA(a)</fullName>
    </alternativeName>
</protein>
<reference key="1">
    <citation type="journal article" date="1988" name="Agric. Biol. Chem.">
        <title>Cloning and nucleotide sequences of the two 130 kDa insecticidal protein genes of Bacillus thuringiensis var. israelensis.</title>
        <authorList>
            <person name="Sen K."/>
            <person name="Honda G."/>
            <person name="Koyama N."/>
            <person name="Nishida M."/>
            <person name="Neki A."/>
            <person name="Sakai H."/>
            <person name="Himeno M."/>
            <person name="Komano T."/>
        </authorList>
    </citation>
    <scope>NUCLEOTIDE SEQUENCE [GENOMIC DNA]</scope>
    <source>
        <strain>HD522</strain>
    </source>
</reference>
<reference key="2">
    <citation type="journal article" date="1987" name="Nucleic Acids Res.">
        <title>Nucleotide sequence of a Bacillus thuringiensis var. israelensis gene encoding a 130 kDa delta-endotoxin.</title>
        <authorList>
            <person name="Ward E.S."/>
            <person name="Ellar D.J."/>
        </authorList>
    </citation>
    <scope>NUCLEOTIDE SEQUENCE [GENOMIC DNA]</scope>
</reference>
<reference key="3">
    <citation type="journal article" date="1994" name="FEBS Lett.">
        <title>Functional analysis of block 5, one of the highly conserved amino acid sequences in the 130-kDa CryIVA protein produced by Bacillus thuringiensis subsp. israelensis.</title>
        <authorList>
            <person name="Nishimoto T."/>
            <person name="Yoshisue H."/>
            <person name="Ihara K."/>
            <person name="Sakai H."/>
            <person name="Komano T."/>
        </authorList>
    </citation>
    <scope>MUTAGENESIS</scope>
</reference>
<name>CR4AA_BACTI</name>
<organism>
    <name type="scientific">Bacillus thuringiensis subsp. israelensis</name>
    <dbReference type="NCBI Taxonomy" id="1430"/>
    <lineage>
        <taxon>Bacteria</taxon>
        <taxon>Bacillati</taxon>
        <taxon>Bacillota</taxon>
        <taxon>Bacilli</taxon>
        <taxon>Bacillales</taxon>
        <taxon>Bacillaceae</taxon>
        <taxon>Bacillus</taxon>
        <taxon>Bacillus cereus group</taxon>
    </lineage>
</organism>
<keyword id="KW-0002">3D-structure</keyword>
<keyword id="KW-0614">Plasmid</keyword>
<keyword id="KW-0749">Sporulation</keyword>
<keyword id="KW-0800">Toxin</keyword>
<keyword id="KW-0843">Virulence</keyword>
<comment type="function">
    <text>Promotes colloidosmotic lysis by binding to the midgut epithelial cells of insects.</text>
</comment>
<comment type="developmental stage">
    <text>The crystal protein is produced during sporulation and is accumulated both as an inclusion and as part of the spore coat.</text>
</comment>
<comment type="miscellaneous">
    <text>Toxic segment of the protein is located in the N-terminus.</text>
</comment>
<comment type="miscellaneous">
    <text>Diverse amino acid mutations in sequence block 667-676 have no direct effect on the insecticidal activity but alter the structural stability of the toxin protein molecule.</text>
</comment>
<comment type="similarity">
    <text evidence="2">Belongs to the delta endotoxin family.</text>
</comment>
<evidence type="ECO:0000303" key="1">
    <source ref="1"/>
</evidence>
<evidence type="ECO:0000305" key="2"/>
<evidence type="ECO:0007829" key="3">
    <source>
        <dbReference type="PDB" id="2C9K"/>
    </source>
</evidence>